<reference key="1">
    <citation type="journal article" date="2005" name="Science">
        <title>The transcriptional landscape of the mammalian genome.</title>
        <authorList>
            <person name="Carninci P."/>
            <person name="Kasukawa T."/>
            <person name="Katayama S."/>
            <person name="Gough J."/>
            <person name="Frith M.C."/>
            <person name="Maeda N."/>
            <person name="Oyama R."/>
            <person name="Ravasi T."/>
            <person name="Lenhard B."/>
            <person name="Wells C."/>
            <person name="Kodzius R."/>
            <person name="Shimokawa K."/>
            <person name="Bajic V.B."/>
            <person name="Brenner S.E."/>
            <person name="Batalov S."/>
            <person name="Forrest A.R."/>
            <person name="Zavolan M."/>
            <person name="Davis M.J."/>
            <person name="Wilming L.G."/>
            <person name="Aidinis V."/>
            <person name="Allen J.E."/>
            <person name="Ambesi-Impiombato A."/>
            <person name="Apweiler R."/>
            <person name="Aturaliya R.N."/>
            <person name="Bailey T.L."/>
            <person name="Bansal M."/>
            <person name="Baxter L."/>
            <person name="Beisel K.W."/>
            <person name="Bersano T."/>
            <person name="Bono H."/>
            <person name="Chalk A.M."/>
            <person name="Chiu K.P."/>
            <person name="Choudhary V."/>
            <person name="Christoffels A."/>
            <person name="Clutterbuck D.R."/>
            <person name="Crowe M.L."/>
            <person name="Dalla E."/>
            <person name="Dalrymple B.P."/>
            <person name="de Bono B."/>
            <person name="Della Gatta G."/>
            <person name="di Bernardo D."/>
            <person name="Down T."/>
            <person name="Engstrom P."/>
            <person name="Fagiolini M."/>
            <person name="Faulkner G."/>
            <person name="Fletcher C.F."/>
            <person name="Fukushima T."/>
            <person name="Furuno M."/>
            <person name="Futaki S."/>
            <person name="Gariboldi M."/>
            <person name="Georgii-Hemming P."/>
            <person name="Gingeras T.R."/>
            <person name="Gojobori T."/>
            <person name="Green R.E."/>
            <person name="Gustincich S."/>
            <person name="Harbers M."/>
            <person name="Hayashi Y."/>
            <person name="Hensch T.K."/>
            <person name="Hirokawa N."/>
            <person name="Hill D."/>
            <person name="Huminiecki L."/>
            <person name="Iacono M."/>
            <person name="Ikeo K."/>
            <person name="Iwama A."/>
            <person name="Ishikawa T."/>
            <person name="Jakt M."/>
            <person name="Kanapin A."/>
            <person name="Katoh M."/>
            <person name="Kawasawa Y."/>
            <person name="Kelso J."/>
            <person name="Kitamura H."/>
            <person name="Kitano H."/>
            <person name="Kollias G."/>
            <person name="Krishnan S.P."/>
            <person name="Kruger A."/>
            <person name="Kummerfeld S.K."/>
            <person name="Kurochkin I.V."/>
            <person name="Lareau L.F."/>
            <person name="Lazarevic D."/>
            <person name="Lipovich L."/>
            <person name="Liu J."/>
            <person name="Liuni S."/>
            <person name="McWilliam S."/>
            <person name="Madan Babu M."/>
            <person name="Madera M."/>
            <person name="Marchionni L."/>
            <person name="Matsuda H."/>
            <person name="Matsuzawa S."/>
            <person name="Miki H."/>
            <person name="Mignone F."/>
            <person name="Miyake S."/>
            <person name="Morris K."/>
            <person name="Mottagui-Tabar S."/>
            <person name="Mulder N."/>
            <person name="Nakano N."/>
            <person name="Nakauchi H."/>
            <person name="Ng P."/>
            <person name="Nilsson R."/>
            <person name="Nishiguchi S."/>
            <person name="Nishikawa S."/>
            <person name="Nori F."/>
            <person name="Ohara O."/>
            <person name="Okazaki Y."/>
            <person name="Orlando V."/>
            <person name="Pang K.C."/>
            <person name="Pavan W.J."/>
            <person name="Pavesi G."/>
            <person name="Pesole G."/>
            <person name="Petrovsky N."/>
            <person name="Piazza S."/>
            <person name="Reed J."/>
            <person name="Reid J.F."/>
            <person name="Ring B.Z."/>
            <person name="Ringwald M."/>
            <person name="Rost B."/>
            <person name="Ruan Y."/>
            <person name="Salzberg S.L."/>
            <person name="Sandelin A."/>
            <person name="Schneider C."/>
            <person name="Schoenbach C."/>
            <person name="Sekiguchi K."/>
            <person name="Semple C.A."/>
            <person name="Seno S."/>
            <person name="Sessa L."/>
            <person name="Sheng Y."/>
            <person name="Shibata Y."/>
            <person name="Shimada H."/>
            <person name="Shimada K."/>
            <person name="Silva D."/>
            <person name="Sinclair B."/>
            <person name="Sperling S."/>
            <person name="Stupka E."/>
            <person name="Sugiura K."/>
            <person name="Sultana R."/>
            <person name="Takenaka Y."/>
            <person name="Taki K."/>
            <person name="Tammoja K."/>
            <person name="Tan S.L."/>
            <person name="Tang S."/>
            <person name="Taylor M.S."/>
            <person name="Tegner J."/>
            <person name="Teichmann S.A."/>
            <person name="Ueda H.R."/>
            <person name="van Nimwegen E."/>
            <person name="Verardo R."/>
            <person name="Wei C.L."/>
            <person name="Yagi K."/>
            <person name="Yamanishi H."/>
            <person name="Zabarovsky E."/>
            <person name="Zhu S."/>
            <person name="Zimmer A."/>
            <person name="Hide W."/>
            <person name="Bult C."/>
            <person name="Grimmond S.M."/>
            <person name="Teasdale R.D."/>
            <person name="Liu E.T."/>
            <person name="Brusic V."/>
            <person name="Quackenbush J."/>
            <person name="Wahlestedt C."/>
            <person name="Mattick J.S."/>
            <person name="Hume D.A."/>
            <person name="Kai C."/>
            <person name="Sasaki D."/>
            <person name="Tomaru Y."/>
            <person name="Fukuda S."/>
            <person name="Kanamori-Katayama M."/>
            <person name="Suzuki M."/>
            <person name="Aoki J."/>
            <person name="Arakawa T."/>
            <person name="Iida J."/>
            <person name="Imamura K."/>
            <person name="Itoh M."/>
            <person name="Kato T."/>
            <person name="Kawaji H."/>
            <person name="Kawagashira N."/>
            <person name="Kawashima T."/>
            <person name="Kojima M."/>
            <person name="Kondo S."/>
            <person name="Konno H."/>
            <person name="Nakano K."/>
            <person name="Ninomiya N."/>
            <person name="Nishio T."/>
            <person name="Okada M."/>
            <person name="Plessy C."/>
            <person name="Shibata K."/>
            <person name="Shiraki T."/>
            <person name="Suzuki S."/>
            <person name="Tagami M."/>
            <person name="Waki K."/>
            <person name="Watahiki A."/>
            <person name="Okamura-Oho Y."/>
            <person name="Suzuki H."/>
            <person name="Kawai J."/>
            <person name="Hayashizaki Y."/>
        </authorList>
    </citation>
    <scope>NUCLEOTIDE SEQUENCE [LARGE SCALE MRNA]</scope>
    <source>
        <strain>C57BL/6J</strain>
        <tissue>Testis</tissue>
    </source>
</reference>
<reference key="2">
    <citation type="journal article" date="2009" name="PLoS Biol.">
        <title>Lineage-specific biology revealed by a finished genome assembly of the mouse.</title>
        <authorList>
            <person name="Church D.M."/>
            <person name="Goodstadt L."/>
            <person name="Hillier L.W."/>
            <person name="Zody M.C."/>
            <person name="Goldstein S."/>
            <person name="She X."/>
            <person name="Bult C.J."/>
            <person name="Agarwala R."/>
            <person name="Cherry J.L."/>
            <person name="DiCuccio M."/>
            <person name="Hlavina W."/>
            <person name="Kapustin Y."/>
            <person name="Meric P."/>
            <person name="Maglott D."/>
            <person name="Birtle Z."/>
            <person name="Marques A.C."/>
            <person name="Graves T."/>
            <person name="Zhou S."/>
            <person name="Teague B."/>
            <person name="Potamousis K."/>
            <person name="Churas C."/>
            <person name="Place M."/>
            <person name="Herschleb J."/>
            <person name="Runnheim R."/>
            <person name="Forrest D."/>
            <person name="Amos-Landgraf J."/>
            <person name="Schwartz D.C."/>
            <person name="Cheng Z."/>
            <person name="Lindblad-Toh K."/>
            <person name="Eichler E.E."/>
            <person name="Ponting C.P."/>
        </authorList>
    </citation>
    <scope>NUCLEOTIDE SEQUENCE [LARGE SCALE GENOMIC DNA]</scope>
    <source>
        <strain>C57BL/6J</strain>
    </source>
</reference>
<reference key="3">
    <citation type="journal article" date="2004" name="Genome Res.">
        <title>The status, quality, and expansion of the NIH full-length cDNA project: the Mammalian Gene Collection (MGC).</title>
        <authorList>
            <consortium name="The MGC Project Team"/>
        </authorList>
    </citation>
    <scope>NUCLEOTIDE SEQUENCE [LARGE SCALE MRNA]</scope>
    <source>
        <tissue>Testis</tissue>
    </source>
</reference>
<sequence length="179" mass="20473">MISRPESSLSGLESSQEVQKKTWNPRNYSARLTENIGLPLILLEKHNPWPAYVAYISPAVTRITEKGWARDLEYIYAAEKNGKPVKRSKHSAVLLKRRKPSKPSELMLKETLSETMLPTWECSTIYVSPTFVPEPAQLQMDVREGPTSNYNKIIFSKRPAMRKLPFGLLQASKEMHTKD</sequence>
<gene>
    <name type="primary">Cdrt4</name>
</gene>
<keyword id="KW-1185">Reference proteome</keyword>
<name>CDRT4_MOUSE</name>
<proteinExistence type="evidence at transcript level"/>
<dbReference type="EMBL" id="AK006125">
    <property type="protein sequence ID" value="BAB24420.1"/>
    <property type="molecule type" value="mRNA"/>
</dbReference>
<dbReference type="EMBL" id="AK006342">
    <property type="protein sequence ID" value="BAB24537.1"/>
    <property type="molecule type" value="mRNA"/>
</dbReference>
<dbReference type="EMBL" id="AL592215">
    <property type="status" value="NOT_ANNOTATED_CDS"/>
    <property type="molecule type" value="Genomic_DNA"/>
</dbReference>
<dbReference type="EMBL" id="AL645847">
    <property type="status" value="NOT_ANNOTATED_CDS"/>
    <property type="molecule type" value="Genomic_DNA"/>
</dbReference>
<dbReference type="EMBL" id="BC048461">
    <property type="protein sequence ID" value="AAH48461.1"/>
    <property type="molecule type" value="mRNA"/>
</dbReference>
<dbReference type="CCDS" id="CCDS24835.1"/>
<dbReference type="RefSeq" id="NP_079772.1">
    <property type="nucleotide sequence ID" value="NM_025496.1"/>
</dbReference>
<dbReference type="STRING" id="10090.ENSMUSP00000048844"/>
<dbReference type="PaxDb" id="10090-ENSMUSP00000048844"/>
<dbReference type="Antibodypedia" id="34822">
    <property type="antibodies" value="75 antibodies from 15 providers"/>
</dbReference>
<dbReference type="DNASU" id="66338"/>
<dbReference type="Ensembl" id="ENSMUST00000035854.4">
    <property type="protein sequence ID" value="ENSMUSP00000048844.4"/>
    <property type="gene ID" value="ENSMUSG00000042200.4"/>
</dbReference>
<dbReference type="GeneID" id="66338"/>
<dbReference type="KEGG" id="mmu:66338"/>
<dbReference type="UCSC" id="uc007jkj.1">
    <property type="organism name" value="mouse"/>
</dbReference>
<dbReference type="AGR" id="MGI:1913588"/>
<dbReference type="CTD" id="284040"/>
<dbReference type="MGI" id="MGI:1913588">
    <property type="gene designation" value="Cdrt4"/>
</dbReference>
<dbReference type="VEuPathDB" id="HostDB:ENSMUSG00000042200"/>
<dbReference type="eggNOG" id="ENOG502SXCX">
    <property type="taxonomic scope" value="Eukaryota"/>
</dbReference>
<dbReference type="GeneTree" id="ENSGT00390000005396"/>
<dbReference type="HOGENOM" id="CLU_128820_0_0_1"/>
<dbReference type="InParanoid" id="Q9DA64"/>
<dbReference type="OMA" id="PTADYNK"/>
<dbReference type="OrthoDB" id="9831498at2759"/>
<dbReference type="PhylomeDB" id="Q9DA64"/>
<dbReference type="TreeFam" id="TF338166"/>
<dbReference type="BioGRID-ORCS" id="66338">
    <property type="hits" value="1 hit in 77 CRISPR screens"/>
</dbReference>
<dbReference type="ChiTaRS" id="Cdrt4">
    <property type="organism name" value="mouse"/>
</dbReference>
<dbReference type="PRO" id="PR:Q9DA64"/>
<dbReference type="Proteomes" id="UP000000589">
    <property type="component" value="Chromosome 11"/>
</dbReference>
<dbReference type="RNAct" id="Q9DA64">
    <property type="molecule type" value="protein"/>
</dbReference>
<dbReference type="Bgee" id="ENSMUSG00000042200">
    <property type="expression patterns" value="Expressed in seminiferous tubule of testis and 31 other cell types or tissues"/>
</dbReference>
<dbReference type="InterPro" id="IPR029185">
    <property type="entry name" value="CDRT4"/>
</dbReference>
<dbReference type="PANTHER" id="PTHR37885">
    <property type="entry name" value="CMT1A DUPLICATED REGION TRANSCRIPT 4 PROTEIN"/>
    <property type="match status" value="1"/>
</dbReference>
<dbReference type="PANTHER" id="PTHR37885:SF1">
    <property type="entry name" value="CMT1A DUPLICATED REGION TRANSCRIPT 4 PROTEIN"/>
    <property type="match status" value="1"/>
</dbReference>
<dbReference type="Pfam" id="PF15213">
    <property type="entry name" value="CDRT4"/>
    <property type="match status" value="1"/>
</dbReference>
<evidence type="ECO:0000256" key="1">
    <source>
        <dbReference type="SAM" id="MobiDB-lite"/>
    </source>
</evidence>
<evidence type="ECO:0000305" key="2"/>
<accession>Q9DA64</accession>
<accession>Q9D9Y3</accession>
<protein>
    <recommendedName>
        <fullName>CMT1A duplicated region transcript 4 protein homolog</fullName>
    </recommendedName>
</protein>
<organism>
    <name type="scientific">Mus musculus</name>
    <name type="common">Mouse</name>
    <dbReference type="NCBI Taxonomy" id="10090"/>
    <lineage>
        <taxon>Eukaryota</taxon>
        <taxon>Metazoa</taxon>
        <taxon>Chordata</taxon>
        <taxon>Craniata</taxon>
        <taxon>Vertebrata</taxon>
        <taxon>Euteleostomi</taxon>
        <taxon>Mammalia</taxon>
        <taxon>Eutheria</taxon>
        <taxon>Euarchontoglires</taxon>
        <taxon>Glires</taxon>
        <taxon>Rodentia</taxon>
        <taxon>Myomorpha</taxon>
        <taxon>Muroidea</taxon>
        <taxon>Muridae</taxon>
        <taxon>Murinae</taxon>
        <taxon>Mus</taxon>
        <taxon>Mus</taxon>
    </lineage>
</organism>
<feature type="chain" id="PRO_0000314904" description="CMT1A duplicated region transcript 4 protein homolog">
    <location>
        <begin position="1"/>
        <end position="179"/>
    </location>
</feature>
<feature type="region of interest" description="Disordered" evidence="1">
    <location>
        <begin position="1"/>
        <end position="20"/>
    </location>
</feature>
<feature type="compositionally biased region" description="Low complexity" evidence="1">
    <location>
        <begin position="1"/>
        <end position="15"/>
    </location>
</feature>
<feature type="sequence conflict" description="In Ref. 1; BAB24537." evidence="2" ref="1">
    <original>L</original>
    <variation>M</variation>
    <location>
        <position position="95"/>
    </location>
</feature>
<feature type="sequence conflict" description="In Ref. 1; BAB24537." evidence="2" ref="1">
    <original>P</original>
    <variation>T</variation>
    <location>
        <position position="103"/>
    </location>
</feature>